<gene>
    <name type="primary">pol</name>
</gene>
<keyword id="KW-0229">DNA integration</keyword>
<keyword id="KW-0233">DNA recombination</keyword>
<keyword id="KW-0255">Endonuclease</keyword>
<keyword id="KW-0378">Hydrolase</keyword>
<keyword id="KW-0511">Multifunctional enzyme</keyword>
<keyword id="KW-0540">Nuclease</keyword>
<keyword id="KW-0548">Nucleotidyltransferase</keyword>
<keyword id="KW-0695">RNA-directed DNA polymerase</keyword>
<keyword id="KW-0808">Transferase</keyword>
<keyword id="KW-1179">Viral genome integration</keyword>
<keyword id="KW-1160">Virus entry into host cell</keyword>
<evidence type="ECO:0000250" key="1">
    <source>
        <dbReference type="UniProtKB" id="P03355"/>
    </source>
</evidence>
<evidence type="ECO:0000255" key="2">
    <source>
        <dbReference type="PROSITE-ProRule" id="PRU00408"/>
    </source>
</evidence>
<evidence type="ECO:0000255" key="3">
    <source>
        <dbReference type="PROSITE-ProRule" id="PRU00457"/>
    </source>
</evidence>
<evidence type="ECO:0000305" key="4"/>
<sequence>LEILAETHGTRPDLTDQPIPDADHTWYTDGSSFLQEGQRKAGAAVTTETEVIWARALPAGTSAQRAELIALTQALKMAEGKRLNVYTDSRYAFATAHIHGEIYKRRGLLTSEGREIKNKSEILALLKALFLPKRLSIIHCLGHQKGDSAEARGNRLADQAAREAAIKAPPDTSTLLIEDSTPYTPAYFHYTETDLKKLRELGATYNQSQGYWVFQGKPVMPDQFVFELLDSLHRLTHLGYQKMKALLDRGESPYYMLNRDKTLQYVADSCTVCAQVNASKAKIGAGVRVRGHRPGTHWEIDFTEVKPGLYGYKYLLVFVDTFSGWVEAFPTKHETAKIVTKKLLEEIFPRFGMPQVLGTDNGPAFVSQVSQSVAKLLGIDWKLHCAYRPQSSGQVERMNRTIKETLTKLTLATGTRDWVLLLPLALYRARNTPGPHGLTPYEILYGAPPPLVNFHDPEMSKFTNSPSLQAHLQALQAVQREVWKPLAAAYQDQLDQPVIPHPFRVGDTVWVRRHQTKNLEPRWKGPYTVLLTTPTALKVDGISAWIHAAHVKAATTPPIRPSWRVQRSQNPLKIRLTRGAP</sequence>
<dbReference type="EC" id="2.7.7.49"/>
<dbReference type="EC" id="3.1.26.4"/>
<dbReference type="EC" id="2.7.7.-" evidence="1"/>
<dbReference type="EC" id="3.1.-.-" evidence="1"/>
<dbReference type="EMBL" id="M93052">
    <property type="protein sequence ID" value="AAA46525.1"/>
    <property type="molecule type" value="Genomic_DNA"/>
</dbReference>
<dbReference type="PIR" id="A42743">
    <property type="entry name" value="A42743"/>
</dbReference>
<dbReference type="SMR" id="P31795"/>
<dbReference type="GO" id="GO:0003676">
    <property type="term" value="F:nucleic acid binding"/>
    <property type="evidence" value="ECO:0007669"/>
    <property type="project" value="InterPro"/>
</dbReference>
<dbReference type="GO" id="GO:0003964">
    <property type="term" value="F:RNA-directed DNA polymerase activity"/>
    <property type="evidence" value="ECO:0007669"/>
    <property type="project" value="UniProtKB-KW"/>
</dbReference>
<dbReference type="GO" id="GO:0004523">
    <property type="term" value="F:RNA-DNA hybrid ribonuclease activity"/>
    <property type="evidence" value="ECO:0007669"/>
    <property type="project" value="UniProtKB-EC"/>
</dbReference>
<dbReference type="GO" id="GO:0015074">
    <property type="term" value="P:DNA integration"/>
    <property type="evidence" value="ECO:0007669"/>
    <property type="project" value="UniProtKB-KW"/>
</dbReference>
<dbReference type="GO" id="GO:0006310">
    <property type="term" value="P:DNA recombination"/>
    <property type="evidence" value="ECO:0007669"/>
    <property type="project" value="UniProtKB-KW"/>
</dbReference>
<dbReference type="GO" id="GO:0075713">
    <property type="term" value="P:establishment of integrated proviral latency"/>
    <property type="evidence" value="ECO:0007669"/>
    <property type="project" value="UniProtKB-KW"/>
</dbReference>
<dbReference type="GO" id="GO:0046718">
    <property type="term" value="P:symbiont entry into host cell"/>
    <property type="evidence" value="ECO:0007669"/>
    <property type="project" value="UniProtKB-KW"/>
</dbReference>
<dbReference type="GO" id="GO:0044826">
    <property type="term" value="P:viral genome integration into host DNA"/>
    <property type="evidence" value="ECO:0007669"/>
    <property type="project" value="UniProtKB-KW"/>
</dbReference>
<dbReference type="CDD" id="cd09273">
    <property type="entry name" value="RNase_HI_RT_Bel"/>
    <property type="match status" value="1"/>
</dbReference>
<dbReference type="FunFam" id="3.30.420.10:FF:000094">
    <property type="entry name" value="Gag-Pol polyprotein"/>
    <property type="match status" value="1"/>
</dbReference>
<dbReference type="FunFam" id="3.30.420.10:FF:000102">
    <property type="entry name" value="Gag-Pol polyprotein"/>
    <property type="match status" value="1"/>
</dbReference>
<dbReference type="Gene3D" id="1.10.340.70">
    <property type="match status" value="1"/>
</dbReference>
<dbReference type="Gene3D" id="2.30.30.850">
    <property type="match status" value="1"/>
</dbReference>
<dbReference type="Gene3D" id="3.30.420.10">
    <property type="entry name" value="Ribonuclease H-like superfamily/Ribonuclease H"/>
    <property type="match status" value="2"/>
</dbReference>
<dbReference type="InterPro" id="IPR039464">
    <property type="entry name" value="Gag-pol_Znf-H3C2"/>
</dbReference>
<dbReference type="InterPro" id="IPR001584">
    <property type="entry name" value="Integrase_cat-core"/>
</dbReference>
<dbReference type="InterPro" id="IPR040643">
    <property type="entry name" value="MLVIN_C"/>
</dbReference>
<dbReference type="InterPro" id="IPR012337">
    <property type="entry name" value="RNaseH-like_sf"/>
</dbReference>
<dbReference type="InterPro" id="IPR002156">
    <property type="entry name" value="RNaseH_domain"/>
</dbReference>
<dbReference type="InterPro" id="IPR036397">
    <property type="entry name" value="RNaseH_sf"/>
</dbReference>
<dbReference type="PANTHER" id="PTHR41694">
    <property type="entry name" value="ENDOGENOUS RETROVIRUS GROUP K MEMBER POL PROTEIN"/>
    <property type="match status" value="1"/>
</dbReference>
<dbReference type="PANTHER" id="PTHR41694:SF5">
    <property type="entry name" value="RIBONUCLEASE H"/>
    <property type="match status" value="1"/>
</dbReference>
<dbReference type="Pfam" id="PF18697">
    <property type="entry name" value="MLVIN_C"/>
    <property type="match status" value="1"/>
</dbReference>
<dbReference type="Pfam" id="PF00075">
    <property type="entry name" value="RNase_H"/>
    <property type="match status" value="1"/>
</dbReference>
<dbReference type="Pfam" id="PF00665">
    <property type="entry name" value="rve"/>
    <property type="match status" value="1"/>
</dbReference>
<dbReference type="Pfam" id="PF16721">
    <property type="entry name" value="zf-H3C2"/>
    <property type="match status" value="1"/>
</dbReference>
<dbReference type="SUPFAM" id="SSF53098">
    <property type="entry name" value="Ribonuclease H-like"/>
    <property type="match status" value="2"/>
</dbReference>
<dbReference type="PROSITE" id="PS50994">
    <property type="entry name" value="INTEGRASE"/>
    <property type="match status" value="1"/>
</dbReference>
<dbReference type="PROSITE" id="PS50879">
    <property type="entry name" value="RNASE_H_1"/>
    <property type="match status" value="1"/>
</dbReference>
<organism>
    <name type="scientific">Radiation murine leukemia virus (strain Kaplan)</name>
    <dbReference type="NCBI Taxonomy" id="31689"/>
    <lineage>
        <taxon>Viruses</taxon>
        <taxon>Riboviria</taxon>
        <taxon>Pararnavirae</taxon>
        <taxon>Artverviricota</taxon>
        <taxon>Revtraviricetes</taxon>
        <taxon>Ortervirales</taxon>
        <taxon>Retroviridae</taxon>
        <taxon>Orthoretrovirinae</taxon>
        <taxon>Gammaretrovirus</taxon>
        <taxon>Murine leukemia virus</taxon>
    </lineage>
</organism>
<feature type="chain" id="PRO_0000199555" description="Pol polyprotein">
    <location>
        <begin position="1" status="less than"/>
        <end position="581"/>
    </location>
</feature>
<feature type="chain" id="PRO_0000259737" description="Reverse transcriptase/ribonuclease H">
    <location>
        <begin position="1" status="less than"/>
        <end status="unknown"/>
    </location>
</feature>
<feature type="chain" id="PRO_0000259738" description="Integrase">
    <location>
        <begin status="unknown"/>
        <end position="581"/>
    </location>
</feature>
<feature type="domain" description="RNase H type-1" evidence="2">
    <location>
        <begin position="20"/>
        <end position="166"/>
    </location>
</feature>
<feature type="domain" description="Integrase catalytic" evidence="3">
    <location>
        <begin position="290"/>
        <end position="448"/>
    </location>
</feature>
<feature type="non-terminal residue">
    <location>
        <position position="1"/>
    </location>
</feature>
<comment type="function">
    <text>During replicative cycle of retroviruses, the reverse-transcribed viral DNA is integrated into the host chromosome by the viral integrase enzyme. RNase H activity is associated with the reverse transcriptase.</text>
</comment>
<comment type="catalytic activity">
    <reaction evidence="2">
        <text>Endonucleolytic cleavage to 5'-phosphomonoester.</text>
        <dbReference type="EC" id="3.1.26.4"/>
    </reaction>
</comment>
<comment type="catalytic activity">
    <reaction>
        <text>DNA(n) + a 2'-deoxyribonucleoside 5'-triphosphate = DNA(n+1) + diphosphate</text>
        <dbReference type="Rhea" id="RHEA:22508"/>
        <dbReference type="Rhea" id="RHEA-COMP:17339"/>
        <dbReference type="Rhea" id="RHEA-COMP:17340"/>
        <dbReference type="ChEBI" id="CHEBI:33019"/>
        <dbReference type="ChEBI" id="CHEBI:61560"/>
        <dbReference type="ChEBI" id="CHEBI:173112"/>
        <dbReference type="EC" id="2.7.7.49"/>
    </reaction>
</comment>
<comment type="PTM">
    <text>Specific enzymatic cleavages in vivo yield mature proteins.</text>
</comment>
<comment type="miscellaneous">
    <text>This protein is synthesized as a Gag-Pol polyprotein.</text>
</comment>
<comment type="similarity">
    <text evidence="4">Belongs to the retroviral Pol polyprotein family.</text>
</comment>
<accession>P31795</accession>
<organismHost>
    <name type="scientific">Mus musculus</name>
    <name type="common">Mouse</name>
    <dbReference type="NCBI Taxonomy" id="10090"/>
</organismHost>
<name>POL_MLVRK</name>
<proteinExistence type="inferred from homology"/>
<protein>
    <recommendedName>
        <fullName>Pol polyprotein</fullName>
    </recommendedName>
    <component>
        <recommendedName>
            <fullName>Reverse transcriptase/ribonuclease H</fullName>
            <shortName>RT</shortName>
            <ecNumber>2.7.7.49</ecNumber>
            <ecNumber>3.1.26.4</ecNumber>
        </recommendedName>
    </component>
    <component>
        <recommendedName>
            <fullName>Integrase</fullName>
            <shortName>IN</shortName>
            <ecNumber evidence="1">2.7.7.-</ecNumber>
            <ecNumber evidence="1">3.1.-.-</ecNumber>
        </recommendedName>
    </component>
</protein>
<reference key="1">
    <citation type="journal article" date="1992" name="J. Virol.">
        <title>Determinants of thymotropism in Kaplan radiation leukemia virus and nucleotide sequence of its envelope region.</title>
        <authorList>
            <person name="Poliquin L."/>
            <person name="Bergeron D."/>
            <person name="Fortier J.L."/>
            <person name="Paquette Y."/>
            <person name="Bergeron R."/>
            <person name="Rassart E."/>
        </authorList>
    </citation>
    <scope>NUCLEOTIDE SEQUENCE [GENOMIC DNA]</scope>
</reference>